<organism>
    <name type="scientific">Yersinia pestis bv. Antiqua (strain Antiqua)</name>
    <dbReference type="NCBI Taxonomy" id="360102"/>
    <lineage>
        <taxon>Bacteria</taxon>
        <taxon>Pseudomonadati</taxon>
        <taxon>Pseudomonadota</taxon>
        <taxon>Gammaproteobacteria</taxon>
        <taxon>Enterobacterales</taxon>
        <taxon>Yersiniaceae</taxon>
        <taxon>Yersinia</taxon>
    </lineage>
</organism>
<dbReference type="EC" id="1.6.5.2" evidence="1"/>
<dbReference type="EMBL" id="CP000308">
    <property type="protein sequence ID" value="ABG13203.1"/>
    <property type="molecule type" value="Genomic_DNA"/>
</dbReference>
<dbReference type="SMR" id="Q1C8L9"/>
<dbReference type="KEGG" id="ypa:YPA_1236"/>
<dbReference type="Proteomes" id="UP000001971">
    <property type="component" value="Chromosome"/>
</dbReference>
<dbReference type="GO" id="GO:0016020">
    <property type="term" value="C:membrane"/>
    <property type="evidence" value="ECO:0007669"/>
    <property type="project" value="TreeGrafter"/>
</dbReference>
<dbReference type="GO" id="GO:0050660">
    <property type="term" value="F:flavin adenine dinucleotide binding"/>
    <property type="evidence" value="ECO:0007669"/>
    <property type="project" value="UniProtKB-UniRule"/>
</dbReference>
<dbReference type="GO" id="GO:0010181">
    <property type="term" value="F:FMN binding"/>
    <property type="evidence" value="ECO:0007669"/>
    <property type="project" value="InterPro"/>
</dbReference>
<dbReference type="GO" id="GO:0051287">
    <property type="term" value="F:NAD binding"/>
    <property type="evidence" value="ECO:0007669"/>
    <property type="project" value="UniProtKB-UniRule"/>
</dbReference>
<dbReference type="GO" id="GO:0050136">
    <property type="term" value="F:NADH:ubiquinone reductase (non-electrogenic) activity"/>
    <property type="evidence" value="ECO:0007669"/>
    <property type="project" value="RHEA"/>
</dbReference>
<dbReference type="GO" id="GO:0050661">
    <property type="term" value="F:NADP binding"/>
    <property type="evidence" value="ECO:0007669"/>
    <property type="project" value="UniProtKB-UniRule"/>
</dbReference>
<dbReference type="GO" id="GO:0008753">
    <property type="term" value="F:NADPH dehydrogenase (quinone) activity"/>
    <property type="evidence" value="ECO:0007669"/>
    <property type="project" value="RHEA"/>
</dbReference>
<dbReference type="FunFam" id="3.40.50.360:FF:000004">
    <property type="entry name" value="NAD(P)H dehydrogenase (quinone)"/>
    <property type="match status" value="1"/>
</dbReference>
<dbReference type="Gene3D" id="3.40.50.360">
    <property type="match status" value="1"/>
</dbReference>
<dbReference type="HAMAP" id="MF_01017">
    <property type="entry name" value="NQOR"/>
    <property type="match status" value="1"/>
</dbReference>
<dbReference type="InterPro" id="IPR008254">
    <property type="entry name" value="Flavodoxin/NO_synth"/>
</dbReference>
<dbReference type="InterPro" id="IPR029039">
    <property type="entry name" value="Flavoprotein-like_sf"/>
</dbReference>
<dbReference type="InterPro" id="IPR010089">
    <property type="entry name" value="Flavoprotein_WrbA-like"/>
</dbReference>
<dbReference type="InterPro" id="IPR005025">
    <property type="entry name" value="FMN_Rdtase-like_dom"/>
</dbReference>
<dbReference type="InterPro" id="IPR037513">
    <property type="entry name" value="NQO"/>
</dbReference>
<dbReference type="NCBIfam" id="TIGR01755">
    <property type="entry name" value="flav_wrbA"/>
    <property type="match status" value="1"/>
</dbReference>
<dbReference type="NCBIfam" id="NF002999">
    <property type="entry name" value="PRK03767.1"/>
    <property type="match status" value="1"/>
</dbReference>
<dbReference type="PANTHER" id="PTHR30546">
    <property type="entry name" value="FLAVODOXIN-RELATED PROTEIN WRBA-RELATED"/>
    <property type="match status" value="1"/>
</dbReference>
<dbReference type="PANTHER" id="PTHR30546:SF23">
    <property type="entry name" value="FLAVOPROTEIN-LIKE PROTEIN YCP4-RELATED"/>
    <property type="match status" value="1"/>
</dbReference>
<dbReference type="Pfam" id="PF03358">
    <property type="entry name" value="FMN_red"/>
    <property type="match status" value="1"/>
</dbReference>
<dbReference type="SUPFAM" id="SSF52218">
    <property type="entry name" value="Flavoproteins"/>
    <property type="match status" value="1"/>
</dbReference>
<dbReference type="PROSITE" id="PS50902">
    <property type="entry name" value="FLAVODOXIN_LIKE"/>
    <property type="match status" value="1"/>
</dbReference>
<proteinExistence type="inferred from homology"/>
<protein>
    <recommendedName>
        <fullName evidence="1">NAD(P)H dehydrogenase (quinone)</fullName>
        <ecNumber evidence="1">1.6.5.2</ecNumber>
    </recommendedName>
    <alternativeName>
        <fullName>Flavoprotein WrbA</fullName>
    </alternativeName>
    <alternativeName>
        <fullName evidence="1">NAD(P)H:quinone oxidoreductase</fullName>
        <shortName evidence="1">NQO</shortName>
    </alternativeName>
</protein>
<gene>
    <name type="ordered locus">YPA_1236</name>
</gene>
<comment type="catalytic activity">
    <reaction evidence="1">
        <text>a quinone + NADH + H(+) = a quinol + NAD(+)</text>
        <dbReference type="Rhea" id="RHEA:46160"/>
        <dbReference type="ChEBI" id="CHEBI:15378"/>
        <dbReference type="ChEBI" id="CHEBI:24646"/>
        <dbReference type="ChEBI" id="CHEBI:57540"/>
        <dbReference type="ChEBI" id="CHEBI:57945"/>
        <dbReference type="ChEBI" id="CHEBI:132124"/>
        <dbReference type="EC" id="1.6.5.2"/>
    </reaction>
</comment>
<comment type="catalytic activity">
    <reaction evidence="1">
        <text>a quinone + NADPH + H(+) = a quinol + NADP(+)</text>
        <dbReference type="Rhea" id="RHEA:46164"/>
        <dbReference type="ChEBI" id="CHEBI:15378"/>
        <dbReference type="ChEBI" id="CHEBI:24646"/>
        <dbReference type="ChEBI" id="CHEBI:57783"/>
        <dbReference type="ChEBI" id="CHEBI:58349"/>
        <dbReference type="ChEBI" id="CHEBI:132124"/>
        <dbReference type="EC" id="1.6.5.2"/>
    </reaction>
</comment>
<comment type="cofactor">
    <cofactor evidence="1">
        <name>FMN</name>
        <dbReference type="ChEBI" id="CHEBI:58210"/>
    </cofactor>
    <text evidence="1">Binds 1 FMN per monomer.</text>
</comment>
<comment type="similarity">
    <text evidence="1">Belongs to the WrbA family.</text>
</comment>
<name>NQOR_YERPA</name>
<reference key="1">
    <citation type="journal article" date="2006" name="J. Bacteriol.">
        <title>Complete genome sequence of Yersinia pestis strains Antiqua and Nepal516: evidence of gene reduction in an emerging pathogen.</title>
        <authorList>
            <person name="Chain P.S.G."/>
            <person name="Hu P."/>
            <person name="Malfatti S.A."/>
            <person name="Radnedge L."/>
            <person name="Larimer F."/>
            <person name="Vergez L.M."/>
            <person name="Worsham P."/>
            <person name="Chu M.C."/>
            <person name="Andersen G.L."/>
        </authorList>
    </citation>
    <scope>NUCLEOTIDE SEQUENCE [LARGE SCALE GENOMIC DNA]</scope>
    <source>
        <strain>Antiqua</strain>
    </source>
</reference>
<accession>Q1C8L9</accession>
<keyword id="KW-0285">Flavoprotein</keyword>
<keyword id="KW-0288">FMN</keyword>
<keyword id="KW-0520">NAD</keyword>
<keyword id="KW-0521">NADP</keyword>
<keyword id="KW-0547">Nucleotide-binding</keyword>
<keyword id="KW-0560">Oxidoreductase</keyword>
<sequence>MAKILVLYYSMYGHIETLAGAIAEGARKVSGVDVTIKRVPETMPAEAFAKAGGKTNQQAPVATPHELADYDGIIFGTPTRFGNMSGQMRTFLDQTGGLWASGALYGKVASVFASTGTGGGQEHTITSTWTTLAHHGFIIVPIGYGAKELFDVSQTRGGTPYGATTIAGGDGSRQPSAEELAIARFQGEHVAKITAKLKG</sequence>
<feature type="chain" id="PRO_0000291037" description="NAD(P)H dehydrogenase (quinone)">
    <location>
        <begin position="1"/>
        <end position="199"/>
    </location>
</feature>
<feature type="domain" description="Flavodoxin-like" evidence="1">
    <location>
        <begin position="4"/>
        <end position="190"/>
    </location>
</feature>
<feature type="binding site" evidence="1">
    <location>
        <begin position="10"/>
        <end position="15"/>
    </location>
    <ligand>
        <name>FMN</name>
        <dbReference type="ChEBI" id="CHEBI:58210"/>
    </ligand>
</feature>
<feature type="binding site" evidence="1">
    <location>
        <position position="12"/>
    </location>
    <ligand>
        <name>NAD(+)</name>
        <dbReference type="ChEBI" id="CHEBI:57540"/>
    </ligand>
</feature>
<feature type="binding site" evidence="1">
    <location>
        <begin position="79"/>
        <end position="81"/>
    </location>
    <ligand>
        <name>FMN</name>
        <dbReference type="ChEBI" id="CHEBI:58210"/>
    </ligand>
</feature>
<feature type="binding site" evidence="1">
    <location>
        <position position="99"/>
    </location>
    <ligand>
        <name>substrate</name>
    </ligand>
</feature>
<feature type="binding site" evidence="1">
    <location>
        <begin position="114"/>
        <end position="119"/>
    </location>
    <ligand>
        <name>FMN</name>
        <dbReference type="ChEBI" id="CHEBI:58210"/>
    </ligand>
</feature>
<feature type="binding site" evidence="1">
    <location>
        <position position="134"/>
    </location>
    <ligand>
        <name>FMN</name>
        <dbReference type="ChEBI" id="CHEBI:58210"/>
    </ligand>
</feature>
<evidence type="ECO:0000255" key="1">
    <source>
        <dbReference type="HAMAP-Rule" id="MF_01017"/>
    </source>
</evidence>